<comment type="function">
    <text evidence="1 8 9 11 12">Binds medium- and long-chain acyl-CoA esters with very high affinity. Can interact in vitro with arachidonyl-CoA, barely with oleoyl-CoA, but not with palmitoyl-CoA. Confers tolerance and binds to lead ions Pb(2+), probably by promoting lead translocation from roots to shoots. May function as an intracellular carrier of acyl-CoA esters (By similarity). Modulates negatively sterol synthesis during embryogenesis and gametophytes development via interactions with SMO1-1 and SMO1-2; sterols serve as lipid modulators for gene expression of homeodomain-leucine zipper IV transcription factors (PubMed:28500265, PubMed:29288621).</text>
</comment>
<comment type="subunit">
    <text evidence="10 11 12">Interacts with RAP2-12 (PubMed:22020282). Binds to SMO1-1 and SMO1-2 (PubMed:28500265, PubMed:29288621).</text>
</comment>
<comment type="interaction">
    <interactant intactId="EBI-2008643">
        <id>Q9SM23</id>
    </interactant>
    <interactant intactId="EBI-4441057">
        <id>Q9SSA8</id>
        <label>RAP2-12</label>
    </interactant>
    <organismsDiffer>false</organismsDiffer>
    <experiments>3</experiments>
</comment>
<comment type="subcellular location">
    <subcellularLocation>
        <location>Cell membrane</location>
        <topology evidence="3">Single-pass membrane protein</topology>
    </subcellularLocation>
    <subcellularLocation>
        <location>Secreted</location>
        <location>Cell wall</location>
    </subcellularLocation>
    <subcellularLocation>
        <location evidence="11 12">Endoplasmic reticulum membrane</location>
        <topology evidence="3">Single-pass membrane protein</topology>
    </subcellularLocation>
    <text>Detected in the cell walls of the outer integument cells at the seed coat.</text>
</comment>
<comment type="tissue specificity">
    <text evidence="13 14">Expressed at low levels in roots, stems, leaves, flowers, and siliques, especially within seeds.</text>
</comment>
<comment type="developmental stage">
    <text evidence="7 11 12">Strongly expressed in developing ovules (PubMed:28500265). Expressed in embryos at the cotyledons, hypocotyls, procambiums, especially in epidermal cells and axis (PubMed:10363372, PubMed:28500265). Accumulates in imbibed pollen grains and in germinating pollen tubes (PubMed:29288621). Detected in embryo sacs (PubMed:29288621).</text>
</comment>
<comment type="induction">
    <text evidence="9">In roots by lead.</text>
</comment>
<comment type="PTM">
    <text evidence="13">Glycosylated. In seeds, localized in the outer integument.</text>
</comment>
<comment type="disruption phenotype">
    <text evidence="9 11 12">Increased sensitivity to lead ions (PubMed:18182029). Proembryo abortion in the double mutant lacking both SMO1-1 and ACBP1 associated with altered fatty acids (FAs) and sterols profiles (PubMed:28500265). Double mutants lacking SMO1-2 and ACBP1 are impaired in seed development, embryo sac development, male and female gamete transmission, and pollen function, as well as altered fatty acids (FAs) and sterols profiles (PubMed:29288621).</text>
</comment>
<comment type="similarity">
    <text evidence="17">Belongs to the ACBP family.</text>
</comment>
<feature type="chain" id="PRO_0000379900" description="Acyl-CoA-binding domain-containing protein 1">
    <location>
        <begin position="1"/>
        <end position="338"/>
    </location>
</feature>
<feature type="transmembrane region" description="Helical; Signal-anchor" evidence="3">
    <location>
        <begin position="11"/>
        <end position="31"/>
    </location>
</feature>
<feature type="domain" description="ACB" evidence="5">
    <location>
        <begin position="94"/>
        <end position="184"/>
    </location>
</feature>
<feature type="repeat" description="ANK 1" evidence="3">
    <location>
        <begin position="217"/>
        <end position="246"/>
    </location>
</feature>
<feature type="repeat" description="ANK 2" evidence="3">
    <location>
        <begin position="250"/>
        <end position="279"/>
    </location>
</feature>
<feature type="repeat" description="ANK 3" evidence="3">
    <location>
        <begin position="283"/>
        <end position="312"/>
    </location>
</feature>
<feature type="repeat" description="ANK 4" evidence="3">
    <location>
        <begin position="316"/>
        <end position="338"/>
    </location>
</feature>
<feature type="region of interest" description="Disordered" evidence="6">
    <location>
        <begin position="69"/>
        <end position="89"/>
    </location>
</feature>
<feature type="compositionally biased region" description="Acidic residues" evidence="6">
    <location>
        <begin position="77"/>
        <end position="89"/>
    </location>
</feature>
<feature type="binding site" evidence="2">
    <location>
        <begin position="126"/>
        <end position="130"/>
    </location>
    <ligand>
        <name>an acyl-CoA</name>
        <dbReference type="ChEBI" id="CHEBI:58342"/>
    </ligand>
</feature>
<feature type="binding site" evidence="2">
    <location>
        <position position="152"/>
    </location>
    <ligand>
        <name>an acyl-CoA</name>
        <dbReference type="ChEBI" id="CHEBI:58342"/>
    </ligand>
</feature>
<feature type="binding site" evidence="2">
    <location>
        <position position="171"/>
    </location>
    <ligand>
        <name>an acyl-CoA</name>
        <dbReference type="ChEBI" id="CHEBI:58342"/>
    </ligand>
</feature>
<feature type="glycosylation site" description="N-linked (GlcNAc...) asparagine" evidence="4">
    <location>
        <position position="35"/>
    </location>
</feature>
<feature type="glycosylation site" description="N-linked (GlcNAc...) asparagine" evidence="4">
    <location>
        <position position="41"/>
    </location>
</feature>
<feature type="glycosylation site" description="N-linked (GlcNAc...) asparagine" evidence="4">
    <location>
        <position position="191"/>
    </location>
</feature>
<feature type="mutagenesis site" description="Normal arachidonyl-CoA-binding activity." evidence="8">
    <original>Y</original>
    <variation>A</variation>
    <location>
        <position position="126"/>
    </location>
</feature>
<feature type="mutagenesis site" description="Normal arachidonyl-CoA-binding activity." evidence="8">
    <original>K</original>
    <variation>A</variation>
    <location>
        <position position="130"/>
    </location>
</feature>
<feature type="mutagenesis site" description="Loss of arachidonyl-CoA-binding activity." evidence="8">
    <original>R</original>
    <variation>A</variation>
    <location>
        <position position="150"/>
    </location>
</feature>
<feature type="mutagenesis site" description="Normal arachidonyl-CoA-binding activity." evidence="8">
    <original>K</original>
    <variation>A</variation>
    <location>
        <position position="152"/>
    </location>
</feature>
<feature type="mutagenesis site" description="Normal arachidonyl-CoA-binding activity." evidence="8">
    <original>Y</original>
    <variation>A</variation>
    <location>
        <position position="171"/>
    </location>
</feature>
<feature type="sequence conflict" description="In Ref. 6; AAM65019." evidence="17" ref="6">
    <original>R</original>
    <variation>G</variation>
    <location>
        <position position="40"/>
    </location>
</feature>
<feature type="sequence conflict" description="In Ref. 1; AAD03482." evidence="17" ref="1">
    <original>T</original>
    <variation>I</variation>
    <location>
        <position position="58"/>
    </location>
</feature>
<feature type="sequence conflict" description="In Ref. 6; AAM65019." evidence="17" ref="6">
    <original>D</original>
    <variation>G</variation>
    <location>
        <position position="65"/>
    </location>
</feature>
<proteinExistence type="evidence at protein level"/>
<keyword id="KW-0040">ANK repeat</keyword>
<keyword id="KW-1003">Cell membrane</keyword>
<keyword id="KW-0134">Cell wall</keyword>
<keyword id="KW-0256">Endoplasmic reticulum</keyword>
<keyword id="KW-0325">Glycoprotein</keyword>
<keyword id="KW-1027">Lead</keyword>
<keyword id="KW-0446">Lipid-binding</keyword>
<keyword id="KW-0472">Membrane</keyword>
<keyword id="KW-0479">Metal-binding</keyword>
<keyword id="KW-1185">Reference proteome</keyword>
<keyword id="KW-0677">Repeat</keyword>
<keyword id="KW-0964">Secreted</keyword>
<keyword id="KW-0735">Signal-anchor</keyword>
<keyword id="KW-0812">Transmembrane</keyword>
<keyword id="KW-1133">Transmembrane helix</keyword>
<keyword id="KW-0813">Transport</keyword>
<reference key="1">
    <citation type="journal article" date="1998" name="Plant Mol. Biol.">
        <title>Arabidopsis cDNA encoding a membrane-associated protein with an acyl-CoA binding domain.</title>
        <authorList>
            <person name="Chye M.-L."/>
        </authorList>
    </citation>
    <scope>NUCLEOTIDE SEQUENCE [MRNA]</scope>
    <scope>SUBCELLULAR LOCATION</scope>
    <scope>TISSUE SPECIFICITY</scope>
    <scope>GLYCOSYLATION</scope>
    <source>
        <strain>cv. C24</strain>
        <tissue>Ovule</tissue>
    </source>
</reference>
<reference key="2">
    <citation type="journal article" date="1999" name="Plant J.">
        <title>Isolation of a gene encoding Arabidopsis membrane-associated acyl-CoA binding protein and immunolocalization of its gene product.</title>
        <authorList>
            <person name="Chye M.-L."/>
            <person name="Huang B.-Q."/>
            <person name="Zee S.Y."/>
        </authorList>
    </citation>
    <scope>NUCLEOTIDE SEQUENCE [GENOMIC DNA]</scope>
    <scope>SUBCELLULAR LOCATION</scope>
    <scope>DEVELOPMENTAL STAGE</scope>
    <source>
        <strain>cv. Columbia</strain>
    </source>
</reference>
<reference key="3">
    <citation type="journal article" date="2000" name="DNA Res.">
        <title>Structural analysis of Arabidopsis thaliana chromosome 5. X. Sequence features of the regions of 3,076,755 bp covered by sixty P1 and TAC clones.</title>
        <authorList>
            <person name="Sato S."/>
            <person name="Nakamura Y."/>
            <person name="Kaneko T."/>
            <person name="Katoh T."/>
            <person name="Asamizu E."/>
            <person name="Kotani H."/>
            <person name="Tabata S."/>
        </authorList>
    </citation>
    <scope>NUCLEOTIDE SEQUENCE [LARGE SCALE GENOMIC DNA]</scope>
    <source>
        <strain>cv. Columbia</strain>
    </source>
</reference>
<reference key="4">
    <citation type="journal article" date="2017" name="Plant J.">
        <title>Araport11: a complete reannotation of the Arabidopsis thaliana reference genome.</title>
        <authorList>
            <person name="Cheng C.Y."/>
            <person name="Krishnakumar V."/>
            <person name="Chan A.P."/>
            <person name="Thibaud-Nissen F."/>
            <person name="Schobel S."/>
            <person name="Town C.D."/>
        </authorList>
    </citation>
    <scope>GENOME REANNOTATION</scope>
    <source>
        <strain>cv. Columbia</strain>
    </source>
</reference>
<reference key="5">
    <citation type="journal article" date="2003" name="Science">
        <title>Empirical analysis of transcriptional activity in the Arabidopsis genome.</title>
        <authorList>
            <person name="Yamada K."/>
            <person name="Lim J."/>
            <person name="Dale J.M."/>
            <person name="Chen H."/>
            <person name="Shinn P."/>
            <person name="Palm C.J."/>
            <person name="Southwick A.M."/>
            <person name="Wu H.C."/>
            <person name="Kim C.J."/>
            <person name="Nguyen M."/>
            <person name="Pham P.K."/>
            <person name="Cheuk R.F."/>
            <person name="Karlin-Newmann G."/>
            <person name="Liu S.X."/>
            <person name="Lam B."/>
            <person name="Sakano H."/>
            <person name="Wu T."/>
            <person name="Yu G."/>
            <person name="Miranda M."/>
            <person name="Quach H.L."/>
            <person name="Tripp M."/>
            <person name="Chang C.H."/>
            <person name="Lee J.M."/>
            <person name="Toriumi M.J."/>
            <person name="Chan M.M."/>
            <person name="Tang C.C."/>
            <person name="Onodera C.S."/>
            <person name="Deng J.M."/>
            <person name="Akiyama K."/>
            <person name="Ansari Y."/>
            <person name="Arakawa T."/>
            <person name="Banh J."/>
            <person name="Banno F."/>
            <person name="Bowser L."/>
            <person name="Brooks S.Y."/>
            <person name="Carninci P."/>
            <person name="Chao Q."/>
            <person name="Choy N."/>
            <person name="Enju A."/>
            <person name="Goldsmith A.D."/>
            <person name="Gurjal M."/>
            <person name="Hansen N.F."/>
            <person name="Hayashizaki Y."/>
            <person name="Johnson-Hopson C."/>
            <person name="Hsuan V.W."/>
            <person name="Iida K."/>
            <person name="Karnes M."/>
            <person name="Khan S."/>
            <person name="Koesema E."/>
            <person name="Ishida J."/>
            <person name="Jiang P.X."/>
            <person name="Jones T."/>
            <person name="Kawai J."/>
            <person name="Kamiya A."/>
            <person name="Meyers C."/>
            <person name="Nakajima M."/>
            <person name="Narusaka M."/>
            <person name="Seki M."/>
            <person name="Sakurai T."/>
            <person name="Satou M."/>
            <person name="Tamse R."/>
            <person name="Vaysberg M."/>
            <person name="Wallender E.K."/>
            <person name="Wong C."/>
            <person name="Yamamura Y."/>
            <person name="Yuan S."/>
            <person name="Shinozaki K."/>
            <person name="Davis R.W."/>
            <person name="Theologis A."/>
            <person name="Ecker J.R."/>
        </authorList>
    </citation>
    <scope>NUCLEOTIDE SEQUENCE [LARGE SCALE MRNA]</scope>
    <source>
        <strain>cv. Columbia</strain>
    </source>
</reference>
<reference key="6">
    <citation type="submission" date="2002-03" db="EMBL/GenBank/DDBJ databases">
        <title>Full-length cDNA from Arabidopsis thaliana.</title>
        <authorList>
            <person name="Brover V.V."/>
            <person name="Troukhan M.E."/>
            <person name="Alexandrov N.A."/>
            <person name="Lu Y.-P."/>
            <person name="Flavell R.B."/>
            <person name="Feldmann K.A."/>
        </authorList>
    </citation>
    <scope>NUCLEOTIDE SEQUENCE [LARGE SCALE MRNA]</scope>
</reference>
<reference key="7">
    <citation type="journal article" date="2003" name="Plant Mol. Biol.">
        <title>Membrane localization of Arabidopsis acyl-CoA binding protein ACBP2.</title>
        <authorList>
            <person name="Li H.-Y."/>
            <person name="Chye M.-L."/>
        </authorList>
    </citation>
    <scope>SUBCELLULAR LOCATION</scope>
    <scope>SIGNAL-ANCHOR</scope>
</reference>
<reference key="8">
    <citation type="journal article" date="2006" name="Planta">
        <title>Arabidopsis ACBP3 is an extracellularly targeted acyl-CoA-binding protein.</title>
        <authorList>
            <person name="Leung K.-C."/>
            <person name="Li H.-Y."/>
            <person name="Xiao S."/>
            <person name="Tse M.-H."/>
            <person name="Chye M.-L."/>
        </authorList>
    </citation>
    <scope>FUNCTION</scope>
    <scope>MUTAGENESIS OF TYR-126; LYS-130; ARG-150; LYS-152 AND TYR-171</scope>
</reference>
<reference key="9">
    <citation type="journal article" date="2007" name="Plant Sci.">
        <title>The effects of down-regulating expression of Arabidopsis thaliana membrane-associated acyl-CoA binding protein 2 on acyl-lipid composition.</title>
        <authorList>
            <person name="Kojima M."/>
            <person name="Casteel J."/>
            <person name="Miernyk J.A."/>
            <person name="Thelen J.J."/>
        </authorList>
        <dbReference type="AGRICOLA" id="IND43855808"/>
    </citation>
    <scope>TISSUE SPECIFICITY</scope>
</reference>
<reference key="10">
    <citation type="journal article" date="2008" name="Plant J.">
        <title>Overexpression of membrane-associated acyl-CoA-binding protein ACBP1 enhances lead tolerance in Arabidopsis.</title>
        <authorList>
            <person name="Xiao S."/>
            <person name="Gao W."/>
            <person name="Chen Q.-F."/>
            <person name="Ramalingam S."/>
            <person name="Chye M.-L."/>
        </authorList>
    </citation>
    <scope>FUNCTION</scope>
    <scope>DISRUPTION PHENOTYPE</scope>
    <scope>INDUCTION BY LEAD</scope>
</reference>
<reference key="11">
    <citation type="journal article" date="2009" name="Plant Physiol. Biochem.">
        <title>An Arabidopsis family of six acyl-CoA-binding proteins has three cytosolic members.</title>
        <authorList>
            <person name="Xiao S."/>
            <person name="Chye M.-L."/>
        </authorList>
    </citation>
    <scope>GENE FAMILY</scope>
    <scope>NOMENCLATURE</scope>
</reference>
<reference key="12">
    <citation type="journal article" date="2011" name="Nature">
        <title>Oxygen sensing in plants is mediated by an N-end rule pathway for protein destabilization.</title>
        <authorList>
            <person name="Licausi F."/>
            <person name="Kosmacz M."/>
            <person name="Weits D.A."/>
            <person name="Giuntoli B."/>
            <person name="Giorgi F.M."/>
            <person name="Voesenek L.A."/>
            <person name="Perata P."/>
            <person name="van Dongen J.T."/>
        </authorList>
    </citation>
    <scope>INTERACTION WITH RAP2-12</scope>
</reference>
<reference key="13">
    <citation type="journal article" date="2017" name="Plant Physiol.">
        <title>Acyl-CoA-binding protein ACBP1 modulates sterol synthesis during embryogenesis.</title>
        <authorList>
            <person name="Lung S.-C."/>
            <person name="Liao P."/>
            <person name="Yeung E.C."/>
            <person name="Hsiao A.-S."/>
            <person name="Xue Y."/>
            <person name="Chye M.-L."/>
        </authorList>
    </citation>
    <scope>FUNCTION</scope>
    <scope>DISRUPTION PHENOTYPE</scope>
    <scope>INTERACTION WITH SMO1-1</scope>
    <scope>DEVELOPMENTAL STAGE</scope>
    <scope>SUBCELLULAR LOCATION</scope>
    <source>
        <strain>cv. Columbia</strain>
    </source>
</reference>
<reference key="14">
    <citation type="journal article" date="2018" name="New Phytol.">
        <title>Arabidopsis ACYL-COA-BINDING PROTEIN1 interacts with STEROL C4-METHYL OXIDASE1-2 to modulate gene expression of homeodomain-leucine zipper IV transcription factors.</title>
        <authorList>
            <person name="Lung S.-C."/>
            <person name="Liao P."/>
            <person name="Yeung E.C."/>
            <person name="Hsiao A.-S."/>
            <person name="Xue Y."/>
            <person name="Chye M.-L."/>
        </authorList>
    </citation>
    <scope>FUNCTION</scope>
    <scope>DISRUPTION PHENOTYPE</scope>
    <scope>INTERACTION WITH SMO1-2</scope>
    <scope>SUBCELLULAR LOCATION</scope>
    <scope>DEVELOPMENTAL STAGE</scope>
    <source>
        <strain>cv. Columbia</strain>
    </source>
</reference>
<name>ACBP1_ARATH</name>
<accession>Q9SM23</accession>
<accession>Q8LB20</accession>
<accession>Q9LV02</accession>
<accession>Q9ZRC2</accession>
<protein>
    <recommendedName>
        <fullName evidence="15 16">Acyl-CoA-binding domain-containing protein 1</fullName>
        <shortName evidence="15 16">Acyl-CoA binding protein 1</shortName>
    </recommendedName>
</protein>
<organism>
    <name type="scientific">Arabidopsis thaliana</name>
    <name type="common">Mouse-ear cress</name>
    <dbReference type="NCBI Taxonomy" id="3702"/>
    <lineage>
        <taxon>Eukaryota</taxon>
        <taxon>Viridiplantae</taxon>
        <taxon>Streptophyta</taxon>
        <taxon>Embryophyta</taxon>
        <taxon>Tracheophyta</taxon>
        <taxon>Spermatophyta</taxon>
        <taxon>Magnoliopsida</taxon>
        <taxon>eudicotyledons</taxon>
        <taxon>Gunneridae</taxon>
        <taxon>Pentapetalae</taxon>
        <taxon>rosids</taxon>
        <taxon>malvids</taxon>
        <taxon>Brassicales</taxon>
        <taxon>Brassicaceae</taxon>
        <taxon>Camelineae</taxon>
        <taxon>Arabidopsis</taxon>
    </lineage>
</organism>
<sequence length="338" mass="37527">MADWYQLAQSIIFGLIFAYLLAKLISILLAFKDENLSLTRNHTTQSEYENLRKVETLTGISGETDSLIAEQGSLRGDEDESDDDDWEGVESTELDEAFSAATAFVAAAASDRLSQKVSNELQLQLYGLYKIATEGPCTAPQPSALKMTARAKWQAWQKLGAMPPEEAMEKYIDLVTQLYPAWVEGGSKRRNRSGEAAGPMGPVFSSLVYEEESDNELKIDAIHAFAREGEVENLLKCIENGIPVNARDSEGRTPLHWAIDRGHLNVAEALVDKNADVNAKDNEGQTSLHYAVVCEREALAEFLVKQKADTTIKDEDGNSPLDLCESEWSWMREKKDSN</sequence>
<evidence type="ECO:0000250" key="1"/>
<evidence type="ECO:0000250" key="2">
    <source>
        <dbReference type="UniProtKB" id="P07107"/>
    </source>
</evidence>
<evidence type="ECO:0000255" key="3"/>
<evidence type="ECO:0000255" key="4">
    <source>
        <dbReference type="PROSITE-ProRule" id="PRU00498"/>
    </source>
</evidence>
<evidence type="ECO:0000255" key="5">
    <source>
        <dbReference type="PROSITE-ProRule" id="PRU00573"/>
    </source>
</evidence>
<evidence type="ECO:0000256" key="6">
    <source>
        <dbReference type="SAM" id="MobiDB-lite"/>
    </source>
</evidence>
<evidence type="ECO:0000269" key="7">
    <source>
    </source>
</evidence>
<evidence type="ECO:0000269" key="8">
    <source>
    </source>
</evidence>
<evidence type="ECO:0000269" key="9">
    <source>
    </source>
</evidence>
<evidence type="ECO:0000269" key="10">
    <source>
    </source>
</evidence>
<evidence type="ECO:0000269" key="11">
    <source>
    </source>
</evidence>
<evidence type="ECO:0000269" key="12">
    <source>
    </source>
</evidence>
<evidence type="ECO:0000269" key="13">
    <source>
    </source>
</evidence>
<evidence type="ECO:0000269" key="14">
    <source ref="9"/>
</evidence>
<evidence type="ECO:0000303" key="15">
    <source>
    </source>
</evidence>
<evidence type="ECO:0000303" key="16">
    <source>
    </source>
</evidence>
<evidence type="ECO:0000305" key="17"/>
<evidence type="ECO:0000312" key="18">
    <source>
        <dbReference type="Araport" id="AT5G53470"/>
    </source>
</evidence>
<evidence type="ECO:0000312" key="19">
    <source>
        <dbReference type="EMBL" id="BAA97324.1"/>
    </source>
</evidence>
<gene>
    <name evidence="15 16" type="primary">ACBP1</name>
    <name evidence="15 16" type="synonym">ACBP</name>
    <name evidence="18" type="ordered locus">At5g53470</name>
    <name evidence="19" type="ORF">MYN8.8</name>
</gene>
<dbReference type="EMBL" id="U75273">
    <property type="protein sequence ID" value="AAD03482.2"/>
    <property type="molecule type" value="mRNA"/>
</dbReference>
<dbReference type="EMBL" id="U75274">
    <property type="protein sequence ID" value="AAF08323.2"/>
    <property type="molecule type" value="Genomic_DNA"/>
</dbReference>
<dbReference type="EMBL" id="AB020754">
    <property type="protein sequence ID" value="BAA97324.1"/>
    <property type="molecule type" value="Genomic_DNA"/>
</dbReference>
<dbReference type="EMBL" id="CP002688">
    <property type="protein sequence ID" value="AED96361.1"/>
    <property type="molecule type" value="Genomic_DNA"/>
</dbReference>
<dbReference type="EMBL" id="AY059881">
    <property type="protein sequence ID" value="AAL24363.1"/>
    <property type="molecule type" value="mRNA"/>
</dbReference>
<dbReference type="EMBL" id="AY093383">
    <property type="protein sequence ID" value="AAM13382.1"/>
    <property type="molecule type" value="mRNA"/>
</dbReference>
<dbReference type="EMBL" id="AY087475">
    <property type="protein sequence ID" value="AAM65019.1"/>
    <property type="molecule type" value="mRNA"/>
</dbReference>
<dbReference type="RefSeq" id="NP_200159.1">
    <property type="nucleotide sequence ID" value="NM_124726.4"/>
</dbReference>
<dbReference type="SMR" id="Q9SM23"/>
<dbReference type="BioGRID" id="20673">
    <property type="interactions" value="3"/>
</dbReference>
<dbReference type="DIP" id="DIP-52243N"/>
<dbReference type="FunCoup" id="Q9SM23">
    <property type="interactions" value="3325"/>
</dbReference>
<dbReference type="IntAct" id="Q9SM23">
    <property type="interactions" value="3"/>
</dbReference>
<dbReference type="STRING" id="3702.Q9SM23"/>
<dbReference type="GlyCosmos" id="Q9SM23">
    <property type="glycosylation" value="3 sites, No reported glycans"/>
</dbReference>
<dbReference type="GlyGen" id="Q9SM23">
    <property type="glycosylation" value="3 sites"/>
</dbReference>
<dbReference type="iPTMnet" id="Q9SM23"/>
<dbReference type="PaxDb" id="3702-AT5G53470.1"/>
<dbReference type="ProteomicsDB" id="244338"/>
<dbReference type="EnsemblPlants" id="AT5G53470.1">
    <property type="protein sequence ID" value="AT5G53470.1"/>
    <property type="gene ID" value="AT5G53470"/>
</dbReference>
<dbReference type="GeneID" id="835428"/>
<dbReference type="Gramene" id="AT5G53470.1">
    <property type="protein sequence ID" value="AT5G53470.1"/>
    <property type="gene ID" value="AT5G53470"/>
</dbReference>
<dbReference type="KEGG" id="ath:AT5G53470"/>
<dbReference type="Araport" id="AT5G53470"/>
<dbReference type="TAIR" id="AT5G53470">
    <property type="gene designation" value="ACBP1"/>
</dbReference>
<dbReference type="eggNOG" id="KOG0817">
    <property type="taxonomic scope" value="Eukaryota"/>
</dbReference>
<dbReference type="HOGENOM" id="CLU_050309_0_0_1"/>
<dbReference type="InParanoid" id="Q9SM23"/>
<dbReference type="OMA" id="ARSKWQA"/>
<dbReference type="PhylomeDB" id="Q9SM23"/>
<dbReference type="PRO" id="PR:Q9SM23"/>
<dbReference type="Proteomes" id="UP000006548">
    <property type="component" value="Chromosome 5"/>
</dbReference>
<dbReference type="ExpressionAtlas" id="Q9SM23">
    <property type="expression patterns" value="baseline and differential"/>
</dbReference>
<dbReference type="GO" id="GO:0005783">
    <property type="term" value="C:endoplasmic reticulum"/>
    <property type="evidence" value="ECO:0000314"/>
    <property type="project" value="UniProtKB"/>
</dbReference>
<dbReference type="GO" id="GO:0005789">
    <property type="term" value="C:endoplasmic reticulum membrane"/>
    <property type="evidence" value="ECO:0007669"/>
    <property type="project" value="UniProtKB-SubCell"/>
</dbReference>
<dbReference type="GO" id="GO:0005576">
    <property type="term" value="C:extracellular region"/>
    <property type="evidence" value="ECO:0007669"/>
    <property type="project" value="UniProtKB-KW"/>
</dbReference>
<dbReference type="GO" id="GO:0009505">
    <property type="term" value="C:plant-type cell wall"/>
    <property type="evidence" value="ECO:0000314"/>
    <property type="project" value="TAIR"/>
</dbReference>
<dbReference type="GO" id="GO:0005886">
    <property type="term" value="C:plasma membrane"/>
    <property type="evidence" value="ECO:0000314"/>
    <property type="project" value="TAIR"/>
</dbReference>
<dbReference type="GO" id="GO:0009536">
    <property type="term" value="C:plastid"/>
    <property type="evidence" value="ECO:0007005"/>
    <property type="project" value="TAIR"/>
</dbReference>
<dbReference type="GO" id="GO:0000062">
    <property type="term" value="F:fatty-acyl-CoA binding"/>
    <property type="evidence" value="ECO:0000314"/>
    <property type="project" value="TAIR"/>
</dbReference>
<dbReference type="GO" id="GO:0032791">
    <property type="term" value="F:lead ion binding"/>
    <property type="evidence" value="ECO:0000314"/>
    <property type="project" value="TAIR"/>
</dbReference>
<dbReference type="GO" id="GO:0008289">
    <property type="term" value="F:lipid binding"/>
    <property type="evidence" value="ECO:0000314"/>
    <property type="project" value="TAIR"/>
</dbReference>
<dbReference type="GO" id="GO:0070300">
    <property type="term" value="F:phosphatidic acid binding"/>
    <property type="evidence" value="ECO:0000314"/>
    <property type="project" value="TAIR"/>
</dbReference>
<dbReference type="GO" id="GO:0055089">
    <property type="term" value="P:fatty acid homeostasis"/>
    <property type="evidence" value="ECO:0000315"/>
    <property type="project" value="UniProtKB"/>
</dbReference>
<dbReference type="GO" id="GO:0006629">
    <property type="term" value="P:lipid metabolic process"/>
    <property type="evidence" value="ECO:0000315"/>
    <property type="project" value="TAIR"/>
</dbReference>
<dbReference type="GO" id="GO:0006869">
    <property type="term" value="P:lipid transport"/>
    <property type="evidence" value="ECO:0000304"/>
    <property type="project" value="TAIR"/>
</dbReference>
<dbReference type="GO" id="GO:0010029">
    <property type="term" value="P:regulation of seed germination"/>
    <property type="evidence" value="ECO:0000315"/>
    <property type="project" value="TAIR"/>
</dbReference>
<dbReference type="GO" id="GO:1900140">
    <property type="term" value="P:regulation of seedling development"/>
    <property type="evidence" value="ECO:0000315"/>
    <property type="project" value="TAIR"/>
</dbReference>
<dbReference type="GO" id="GO:0009737">
    <property type="term" value="P:response to abscisic acid"/>
    <property type="evidence" value="ECO:0000270"/>
    <property type="project" value="TAIR"/>
</dbReference>
<dbReference type="GO" id="GO:0009409">
    <property type="term" value="P:response to cold"/>
    <property type="evidence" value="ECO:0000315"/>
    <property type="project" value="TAIR"/>
</dbReference>
<dbReference type="GO" id="GO:0010288">
    <property type="term" value="P:response to lead ion"/>
    <property type="evidence" value="ECO:0000315"/>
    <property type="project" value="TAIR"/>
</dbReference>
<dbReference type="GO" id="GO:0048316">
    <property type="term" value="P:seed development"/>
    <property type="evidence" value="ECO:0000316"/>
    <property type="project" value="TAIR"/>
</dbReference>
<dbReference type="GO" id="GO:0010162">
    <property type="term" value="P:seed dormancy process"/>
    <property type="evidence" value="ECO:0000315"/>
    <property type="project" value="TAIR"/>
</dbReference>
<dbReference type="GO" id="GO:0055092">
    <property type="term" value="P:sterol homeostasis"/>
    <property type="evidence" value="ECO:0000315"/>
    <property type="project" value="UniProtKB"/>
</dbReference>
<dbReference type="Gene3D" id="1.20.80.10">
    <property type="match status" value="1"/>
</dbReference>
<dbReference type="Gene3D" id="1.25.40.20">
    <property type="entry name" value="Ankyrin repeat-containing domain"/>
    <property type="match status" value="1"/>
</dbReference>
<dbReference type="InterPro" id="IPR000582">
    <property type="entry name" value="Acyl-CoA-binding_protein"/>
</dbReference>
<dbReference type="InterPro" id="IPR035984">
    <property type="entry name" value="Acyl-CoA-binding_sf"/>
</dbReference>
<dbReference type="InterPro" id="IPR002110">
    <property type="entry name" value="Ankyrin_rpt"/>
</dbReference>
<dbReference type="InterPro" id="IPR036770">
    <property type="entry name" value="Ankyrin_rpt-contain_sf"/>
</dbReference>
<dbReference type="InterPro" id="IPR014352">
    <property type="entry name" value="FERM/acyl-CoA-bd_prot_sf"/>
</dbReference>
<dbReference type="PANTHER" id="PTHR24119">
    <property type="entry name" value="ACYL-COA-BINDING DOMAIN-CONTAINING PROTEIN 6"/>
    <property type="match status" value="1"/>
</dbReference>
<dbReference type="PANTHER" id="PTHR24119:SF0">
    <property type="entry name" value="ACYL-COA-BINDING DOMAIN-CONTAINING PROTEIN 6"/>
    <property type="match status" value="1"/>
</dbReference>
<dbReference type="Pfam" id="PF00887">
    <property type="entry name" value="ACBP"/>
    <property type="match status" value="1"/>
</dbReference>
<dbReference type="Pfam" id="PF12796">
    <property type="entry name" value="Ank_2"/>
    <property type="match status" value="1"/>
</dbReference>
<dbReference type="PRINTS" id="PR00689">
    <property type="entry name" value="ACOABINDINGP"/>
</dbReference>
<dbReference type="SMART" id="SM00248">
    <property type="entry name" value="ANK"/>
    <property type="match status" value="2"/>
</dbReference>
<dbReference type="SUPFAM" id="SSF47027">
    <property type="entry name" value="Acyl-CoA binding protein"/>
    <property type="match status" value="1"/>
</dbReference>
<dbReference type="SUPFAM" id="SSF48403">
    <property type="entry name" value="Ankyrin repeat"/>
    <property type="match status" value="1"/>
</dbReference>
<dbReference type="PROSITE" id="PS51228">
    <property type="entry name" value="ACB_2"/>
    <property type="match status" value="1"/>
</dbReference>
<dbReference type="PROSITE" id="PS50297">
    <property type="entry name" value="ANK_REP_REGION"/>
    <property type="match status" value="1"/>
</dbReference>
<dbReference type="PROSITE" id="PS50088">
    <property type="entry name" value="ANK_REPEAT"/>
    <property type="match status" value="2"/>
</dbReference>